<comment type="function">
    <text evidence="2">Catalyzes the second of the four reactions of the long-chain fatty acids elongation cycle. This endoplasmic reticulum-bound enzymatic process, allows the addition of two carbons to the chain of long- and very long-chain fatty acids/VLCFAs per cycle. This enzyme has a 3-ketoacyl-CoA reductase activity, reducing 3-ketoacyl-CoA to 3-hydroxyacyl-CoA, within each cycle of fatty acid elongation. Thereby, it may participate in the production of VLCFAs of different chain lengths that are involved in multiple biological processes as precursors of membrane lipids and lipid mediators. May also catalyze the transformation of estrone (E1) into estradiol (E2) and play a role in estrogen formation.</text>
</comment>
<comment type="catalytic activity">
    <reaction evidence="2">
        <text>a very-long-chain (3R)-3-hydroxyacyl-CoA + NADP(+) = a very-long-chain 3-oxoacyl-CoA + NADPH + H(+)</text>
        <dbReference type="Rhea" id="RHEA:48680"/>
        <dbReference type="ChEBI" id="CHEBI:15378"/>
        <dbReference type="ChEBI" id="CHEBI:57783"/>
        <dbReference type="ChEBI" id="CHEBI:58349"/>
        <dbReference type="ChEBI" id="CHEBI:85440"/>
        <dbReference type="ChEBI" id="CHEBI:90725"/>
        <dbReference type="EC" id="1.1.1.330"/>
    </reaction>
</comment>
<comment type="catalytic activity">
    <reaction evidence="2">
        <text>17beta-estradiol + NAD(+) = estrone + NADH + H(+)</text>
        <dbReference type="Rhea" id="RHEA:24612"/>
        <dbReference type="ChEBI" id="CHEBI:15378"/>
        <dbReference type="ChEBI" id="CHEBI:16469"/>
        <dbReference type="ChEBI" id="CHEBI:17263"/>
        <dbReference type="ChEBI" id="CHEBI:57540"/>
        <dbReference type="ChEBI" id="CHEBI:57945"/>
        <dbReference type="EC" id="1.1.1.62"/>
    </reaction>
</comment>
<comment type="catalytic activity">
    <reaction evidence="2">
        <text>17beta-estradiol + NADP(+) = estrone + NADPH + H(+)</text>
        <dbReference type="Rhea" id="RHEA:24616"/>
        <dbReference type="ChEBI" id="CHEBI:15378"/>
        <dbReference type="ChEBI" id="CHEBI:16469"/>
        <dbReference type="ChEBI" id="CHEBI:17263"/>
        <dbReference type="ChEBI" id="CHEBI:57783"/>
        <dbReference type="ChEBI" id="CHEBI:58349"/>
        <dbReference type="EC" id="1.1.1.62"/>
    </reaction>
</comment>
<comment type="pathway">
    <text evidence="2">Lipid metabolism; fatty acid biosynthesis.</text>
</comment>
<comment type="pathway">
    <text evidence="2">Steroid biosynthesis; estrogen biosynthesis.</text>
</comment>
<comment type="subcellular location">
    <subcellularLocation>
        <location evidence="2">Endoplasmic reticulum membrane</location>
        <topology evidence="2">Multi-pass membrane protein</topology>
    </subcellularLocation>
</comment>
<comment type="similarity">
    <text evidence="5">Belongs to the short-chain dehydrogenases/reductases (SDR) family. 17-beta-HSD 3 subfamily.</text>
</comment>
<gene>
    <name type="primary">hsd17b12-b</name>
</gene>
<name>DH12B_XENLA</name>
<feature type="chain" id="PRO_0000248374" description="Very-long-chain 3-oxoacyl-CoA reductase-B">
    <location>
        <begin position="1"/>
        <end position="318"/>
    </location>
</feature>
<feature type="transmembrane region" description="Helical" evidence="3">
    <location>
        <begin position="15"/>
        <end position="35"/>
    </location>
</feature>
<feature type="transmembrane region" description="Helical" evidence="3">
    <location>
        <begin position="187"/>
        <end position="207"/>
    </location>
</feature>
<feature type="transmembrane region" description="Helical" evidence="3">
    <location>
        <begin position="281"/>
        <end position="301"/>
    </location>
</feature>
<feature type="active site" description="Proton acceptor" evidence="4">
    <location>
        <position position="207"/>
    </location>
</feature>
<feature type="binding site" evidence="1">
    <location>
        <begin position="54"/>
        <end position="83"/>
    </location>
    <ligand>
        <name>NADP(+)</name>
        <dbReference type="ChEBI" id="CHEBI:58349"/>
    </ligand>
</feature>
<feature type="binding site" evidence="1">
    <location>
        <position position="194"/>
    </location>
    <ligand>
        <name>substrate</name>
    </ligand>
</feature>
<keyword id="KW-0256">Endoplasmic reticulum</keyword>
<keyword id="KW-0444">Lipid biosynthesis</keyword>
<keyword id="KW-0443">Lipid metabolism</keyword>
<keyword id="KW-0472">Membrane</keyword>
<keyword id="KW-0521">NADP</keyword>
<keyword id="KW-0560">Oxidoreductase</keyword>
<keyword id="KW-1185">Reference proteome</keyword>
<keyword id="KW-0752">Steroid biosynthesis</keyword>
<keyword id="KW-0812">Transmembrane</keyword>
<keyword id="KW-1133">Transmembrane helix</keyword>
<reference key="1">
    <citation type="submission" date="2002-12" db="EMBL/GenBank/DDBJ databases">
        <authorList>
            <consortium name="NIH - Xenopus Gene Collection (XGC) project"/>
        </authorList>
    </citation>
    <scope>NUCLEOTIDE SEQUENCE [LARGE SCALE MRNA]</scope>
    <source>
        <tissue>Embryo</tissue>
    </source>
</reference>
<accession>Q8AVY8</accession>
<dbReference type="EC" id="1.1.1.330" evidence="2"/>
<dbReference type="EC" id="1.1.1.62" evidence="2"/>
<dbReference type="EMBL" id="BC041194">
    <property type="protein sequence ID" value="AAH41194.1"/>
    <property type="molecule type" value="mRNA"/>
</dbReference>
<dbReference type="RefSeq" id="NP_001080055.1">
    <property type="nucleotide sequence ID" value="NM_001086586.2"/>
</dbReference>
<dbReference type="SMR" id="Q8AVY8"/>
<dbReference type="BioGRID" id="97989">
    <property type="interactions" value="1"/>
</dbReference>
<dbReference type="DNASU" id="379747"/>
<dbReference type="GeneID" id="379747"/>
<dbReference type="KEGG" id="xla:379747"/>
<dbReference type="AGR" id="Xenbase:XB-GENE-945234"/>
<dbReference type="CTD" id="379747"/>
<dbReference type="Xenbase" id="XB-GENE-945234">
    <property type="gene designation" value="hsd17b12.S"/>
</dbReference>
<dbReference type="OrthoDB" id="5545019at2759"/>
<dbReference type="UniPathway" id="UPA00094"/>
<dbReference type="UniPathway" id="UPA00769"/>
<dbReference type="Proteomes" id="UP000186698">
    <property type="component" value="Chromosome 4S"/>
</dbReference>
<dbReference type="Bgee" id="379747">
    <property type="expression patterns" value="Expressed in internal ear and 20 other cell types or tissues"/>
</dbReference>
<dbReference type="GO" id="GO:0005783">
    <property type="term" value="C:endoplasmic reticulum"/>
    <property type="evidence" value="ECO:0000318"/>
    <property type="project" value="GO_Central"/>
</dbReference>
<dbReference type="GO" id="GO:0005789">
    <property type="term" value="C:endoplasmic reticulum membrane"/>
    <property type="evidence" value="ECO:0007669"/>
    <property type="project" value="UniProtKB-SubCell"/>
</dbReference>
<dbReference type="GO" id="GO:0004303">
    <property type="term" value="F:estradiol 17-beta-dehydrogenase [NAD(P)+] activity"/>
    <property type="evidence" value="ECO:0007669"/>
    <property type="project" value="UniProtKB-EC"/>
</dbReference>
<dbReference type="GO" id="GO:0016491">
    <property type="term" value="F:oxidoreductase activity"/>
    <property type="evidence" value="ECO:0000318"/>
    <property type="project" value="GO_Central"/>
</dbReference>
<dbReference type="GO" id="GO:0141040">
    <property type="term" value="F:very-long-chain 3-oxoacyl-CoA reductase activity"/>
    <property type="evidence" value="ECO:0007669"/>
    <property type="project" value="UniProtKB-EC"/>
</dbReference>
<dbReference type="GO" id="GO:0006703">
    <property type="term" value="P:estrogen biosynthetic process"/>
    <property type="evidence" value="ECO:0007669"/>
    <property type="project" value="UniProtKB-UniPathway"/>
</dbReference>
<dbReference type="GO" id="GO:0006633">
    <property type="term" value="P:fatty acid biosynthetic process"/>
    <property type="evidence" value="ECO:0007669"/>
    <property type="project" value="UniProtKB-UniPathway"/>
</dbReference>
<dbReference type="CDD" id="cd05356">
    <property type="entry name" value="17beta-HSD1_like_SDR_c"/>
    <property type="match status" value="1"/>
</dbReference>
<dbReference type="FunFam" id="3.40.50.720:FF:000137">
    <property type="entry name" value="Hydroxysteroid (17-beta) dehydrogenase 3"/>
    <property type="match status" value="1"/>
</dbReference>
<dbReference type="Gene3D" id="3.40.50.720">
    <property type="entry name" value="NAD(P)-binding Rossmann-like Domain"/>
    <property type="match status" value="1"/>
</dbReference>
<dbReference type="InterPro" id="IPR036291">
    <property type="entry name" value="NAD(P)-bd_dom_sf"/>
</dbReference>
<dbReference type="InterPro" id="IPR020904">
    <property type="entry name" value="Sc_DH/Rdtase_CS"/>
</dbReference>
<dbReference type="InterPro" id="IPR002347">
    <property type="entry name" value="SDR_fam"/>
</dbReference>
<dbReference type="InterPro" id="IPR051019">
    <property type="entry name" value="VLCFA-Steroid_DH"/>
</dbReference>
<dbReference type="PANTHER" id="PTHR43899">
    <property type="entry name" value="RH59310P"/>
    <property type="match status" value="1"/>
</dbReference>
<dbReference type="PANTHER" id="PTHR43899:SF14">
    <property type="entry name" value="VERY-LONG-CHAIN 3-OXOACYL-COA REDUCTASE"/>
    <property type="match status" value="1"/>
</dbReference>
<dbReference type="Pfam" id="PF00106">
    <property type="entry name" value="adh_short"/>
    <property type="match status" value="1"/>
</dbReference>
<dbReference type="PIRSF" id="PIRSF000126">
    <property type="entry name" value="11-beta-HSD1"/>
    <property type="match status" value="1"/>
</dbReference>
<dbReference type="PRINTS" id="PR00081">
    <property type="entry name" value="GDHRDH"/>
</dbReference>
<dbReference type="PRINTS" id="PR00080">
    <property type="entry name" value="SDRFAMILY"/>
</dbReference>
<dbReference type="SUPFAM" id="SSF51735">
    <property type="entry name" value="NAD(P)-binding Rossmann-fold domains"/>
    <property type="match status" value="1"/>
</dbReference>
<dbReference type="PROSITE" id="PS00061">
    <property type="entry name" value="ADH_SHORT"/>
    <property type="match status" value="1"/>
</dbReference>
<sequence>MAPESLAEVPGCNCFWYLGVVAATWWGLRAAWCLLNGARVWVLGSGAQVGPTIGKWAVVTGATDGIGKAYAEELARRGMNIVLISRSPEKLEEAAIHIKQKFKVETKIIAADFGKPTEIYERIEAGLRDLEIGVLVNNVGISYEYPEYFLEIPDLENTLDKMININIMSVCQMTRLVLPGMLGRGKGVVLNISSASGMYPVPLLTVYSATKAFVDFFSRGLHAEYRSKGVTVQSVLPFFVATKLAKIRKPTWDKPSPETYVRSALNTVGLQTQTNGYLPHAITGWISTSLVPVSAAISMGMKMNKGLRARFLKKAKQN</sequence>
<evidence type="ECO:0000250" key="1"/>
<evidence type="ECO:0000250" key="2">
    <source>
        <dbReference type="UniProtKB" id="Q53GQ0"/>
    </source>
</evidence>
<evidence type="ECO:0000255" key="3"/>
<evidence type="ECO:0000255" key="4">
    <source>
        <dbReference type="PROSITE-ProRule" id="PRU10001"/>
    </source>
</evidence>
<evidence type="ECO:0000305" key="5"/>
<organism>
    <name type="scientific">Xenopus laevis</name>
    <name type="common">African clawed frog</name>
    <dbReference type="NCBI Taxonomy" id="8355"/>
    <lineage>
        <taxon>Eukaryota</taxon>
        <taxon>Metazoa</taxon>
        <taxon>Chordata</taxon>
        <taxon>Craniata</taxon>
        <taxon>Vertebrata</taxon>
        <taxon>Euteleostomi</taxon>
        <taxon>Amphibia</taxon>
        <taxon>Batrachia</taxon>
        <taxon>Anura</taxon>
        <taxon>Pipoidea</taxon>
        <taxon>Pipidae</taxon>
        <taxon>Xenopodinae</taxon>
        <taxon>Xenopus</taxon>
        <taxon>Xenopus</taxon>
    </lineage>
</organism>
<proteinExistence type="evidence at transcript level"/>
<protein>
    <recommendedName>
        <fullName evidence="5">Very-long-chain 3-oxoacyl-CoA reductase-B</fullName>
        <ecNumber evidence="2">1.1.1.330</ecNumber>
    </recommendedName>
    <alternativeName>
        <fullName evidence="2">17-beta-hydroxysteroid dehydrogenase 12-B</fullName>
        <shortName evidence="2">17-beta-HSD 12-B</shortName>
    </alternativeName>
    <alternativeName>
        <fullName evidence="2">3-ketoacyl-CoA reductase</fullName>
        <shortName evidence="2">KAR</shortName>
    </alternativeName>
    <alternativeName>
        <fullName evidence="2">Estradiol 17-beta-dehydrogenase 12-B</fullName>
        <ecNumber evidence="2">1.1.1.62</ecNumber>
    </alternativeName>
</protein>